<organism>
    <name type="scientific">Escherichia coli O127:H6 (strain E2348/69 / EPEC)</name>
    <dbReference type="NCBI Taxonomy" id="574521"/>
    <lineage>
        <taxon>Bacteria</taxon>
        <taxon>Pseudomonadati</taxon>
        <taxon>Pseudomonadota</taxon>
        <taxon>Gammaproteobacteria</taxon>
        <taxon>Enterobacterales</taxon>
        <taxon>Enterobacteriaceae</taxon>
        <taxon>Escherichia</taxon>
    </lineage>
</organism>
<protein>
    <recommendedName>
        <fullName evidence="1">Fatty acid oxidation complex subunit alpha</fullName>
    </recommendedName>
    <domain>
        <recommendedName>
            <fullName evidence="1">Enoyl-CoA hydratase/3-hydroxybutyryl-CoA epimerase</fullName>
            <ecNumber evidence="1">4.2.1.17</ecNumber>
            <ecNumber evidence="1">5.1.2.3</ecNumber>
        </recommendedName>
    </domain>
    <domain>
        <recommendedName>
            <fullName evidence="1">3-hydroxyacyl-CoA dehydrogenase</fullName>
            <ecNumber evidence="1">1.1.1.35</ecNumber>
        </recommendedName>
    </domain>
</protein>
<proteinExistence type="inferred from homology"/>
<sequence length="714" mass="77148">MEMASAFTLNVRLDNIAIITIDVPGEKMNTLKAEFASQVRAIIKQIRENKELRGVVFVSAKPDNFIAGADINMIGNCKTAQEAEVLARQGQQLMAEIHALPIPVIAAIHGACLGGGLELALACHGRVCTDDPKTVLGLPEVQLGLLPGSGGTQRLPRLIGVSTALEMILTGKQLRAKQAVKLGLVDDVVPHSILLEAAVELAKQDRPSSRPLPVRERILAGPLGRALLFKMVGKKTEHKTQGNYPATERILEVVETGLAQGTSSGYDAEARAFGELAMTPQSQALRNIFFASSEVKKDPGSDAPPAPLNSVGILGGGLMGGGIAYVTACKAGLPVRIKDINPRGINHALKYSWDQLEGKVRRRHLKASERDKQLALISGTTDYCGFAHRDLIIEAVFENLELKQQMVAEVEQNCATHTIFASNTSSLPIGDIAAHAARPEQVIGLHFFSPVEKMPLVEIIPHASTSAQTIATTVKLAKKQGKTPIVVRDKAGFYVNRILAPYINEAIRMLTEGERIEHIDAALVKFGFPVGPIQLLDEVGIDTGTKIMPVLEAAYGERFSAPANVVSSILNDDRKGRKNGRGFYLYGQKGRKSKKQVDPAIYPLIGAQGQGRLSAPQVAERCVMLMLNEAVRCLDEQVIRSVRDGDIGAVFGIGFPPFLGGPFRYIDSLGAGEVVAIMQRLATQYGSRFTPCDRLVEMSERGESFWKTTATDLQ</sequence>
<dbReference type="EC" id="4.2.1.17" evidence="1"/>
<dbReference type="EC" id="5.1.2.3" evidence="1"/>
<dbReference type="EC" id="1.1.1.35" evidence="1"/>
<dbReference type="EMBL" id="FM180568">
    <property type="protein sequence ID" value="CAS10028.1"/>
    <property type="molecule type" value="Genomic_DNA"/>
</dbReference>
<dbReference type="RefSeq" id="WP_000425006.1">
    <property type="nucleotide sequence ID" value="NC_011601.1"/>
</dbReference>
<dbReference type="SMR" id="B7UFZ8"/>
<dbReference type="KEGG" id="ecg:E2348C_2480"/>
<dbReference type="HOGENOM" id="CLU_009834_16_1_6"/>
<dbReference type="UniPathway" id="UPA00659"/>
<dbReference type="Proteomes" id="UP000008205">
    <property type="component" value="Chromosome"/>
</dbReference>
<dbReference type="GO" id="GO:0005737">
    <property type="term" value="C:cytoplasm"/>
    <property type="evidence" value="ECO:0007669"/>
    <property type="project" value="UniProtKB-SubCell"/>
</dbReference>
<dbReference type="GO" id="GO:0008692">
    <property type="term" value="F:3-hydroxybutyryl-CoA epimerase activity"/>
    <property type="evidence" value="ECO:0007669"/>
    <property type="project" value="UniProtKB-UniRule"/>
</dbReference>
<dbReference type="GO" id="GO:0004300">
    <property type="term" value="F:enoyl-CoA hydratase activity"/>
    <property type="evidence" value="ECO:0007669"/>
    <property type="project" value="UniProtKB-UniRule"/>
</dbReference>
<dbReference type="GO" id="GO:0016509">
    <property type="term" value="F:long-chain-3-hydroxyacyl-CoA dehydrogenase activity"/>
    <property type="evidence" value="ECO:0007669"/>
    <property type="project" value="TreeGrafter"/>
</dbReference>
<dbReference type="GO" id="GO:0070403">
    <property type="term" value="F:NAD+ binding"/>
    <property type="evidence" value="ECO:0007669"/>
    <property type="project" value="InterPro"/>
</dbReference>
<dbReference type="GO" id="GO:0006635">
    <property type="term" value="P:fatty acid beta-oxidation"/>
    <property type="evidence" value="ECO:0007669"/>
    <property type="project" value="UniProtKB-UniRule"/>
</dbReference>
<dbReference type="CDD" id="cd06558">
    <property type="entry name" value="crotonase-like"/>
    <property type="match status" value="1"/>
</dbReference>
<dbReference type="FunFam" id="1.10.1040.50:FF:000003">
    <property type="entry name" value="Fatty acid oxidation complex subunit alpha"/>
    <property type="match status" value="1"/>
</dbReference>
<dbReference type="FunFam" id="3.90.226.10:FF:000011">
    <property type="entry name" value="Fatty acid oxidation complex subunit alpha"/>
    <property type="match status" value="1"/>
</dbReference>
<dbReference type="FunFam" id="3.40.50.720:FF:000009">
    <property type="entry name" value="Fatty oxidation complex, alpha subunit"/>
    <property type="match status" value="1"/>
</dbReference>
<dbReference type="Gene3D" id="1.10.1040.50">
    <property type="match status" value="1"/>
</dbReference>
<dbReference type="Gene3D" id="3.90.226.10">
    <property type="entry name" value="2-enoyl-CoA Hydratase, Chain A, domain 1"/>
    <property type="match status" value="1"/>
</dbReference>
<dbReference type="Gene3D" id="3.40.50.720">
    <property type="entry name" value="NAD(P)-binding Rossmann-like Domain"/>
    <property type="match status" value="1"/>
</dbReference>
<dbReference type="HAMAP" id="MF_01617">
    <property type="entry name" value="FadJ"/>
    <property type="match status" value="1"/>
</dbReference>
<dbReference type="InterPro" id="IPR006180">
    <property type="entry name" value="3-OHacyl-CoA_DH_CS"/>
</dbReference>
<dbReference type="InterPro" id="IPR006176">
    <property type="entry name" value="3-OHacyl-CoA_DH_NAD-bd"/>
</dbReference>
<dbReference type="InterPro" id="IPR006108">
    <property type="entry name" value="3HC_DH_C"/>
</dbReference>
<dbReference type="InterPro" id="IPR008927">
    <property type="entry name" value="6-PGluconate_DH-like_C_sf"/>
</dbReference>
<dbReference type="InterPro" id="IPR029045">
    <property type="entry name" value="ClpP/crotonase-like_dom_sf"/>
</dbReference>
<dbReference type="InterPro" id="IPR001753">
    <property type="entry name" value="Enoyl-CoA_hydra/iso"/>
</dbReference>
<dbReference type="InterPro" id="IPR050136">
    <property type="entry name" value="FA_oxidation_alpha_subunit"/>
</dbReference>
<dbReference type="InterPro" id="IPR012802">
    <property type="entry name" value="FadJ"/>
</dbReference>
<dbReference type="InterPro" id="IPR036291">
    <property type="entry name" value="NAD(P)-bd_dom_sf"/>
</dbReference>
<dbReference type="NCBIfam" id="TIGR02440">
    <property type="entry name" value="FadJ"/>
    <property type="match status" value="1"/>
</dbReference>
<dbReference type="NCBIfam" id="NF008363">
    <property type="entry name" value="PRK11154.1"/>
    <property type="match status" value="1"/>
</dbReference>
<dbReference type="PANTHER" id="PTHR43612">
    <property type="entry name" value="TRIFUNCTIONAL ENZYME SUBUNIT ALPHA"/>
    <property type="match status" value="1"/>
</dbReference>
<dbReference type="PANTHER" id="PTHR43612:SF3">
    <property type="entry name" value="TRIFUNCTIONAL ENZYME SUBUNIT ALPHA, MITOCHONDRIAL"/>
    <property type="match status" value="1"/>
</dbReference>
<dbReference type="Pfam" id="PF00725">
    <property type="entry name" value="3HCDH"/>
    <property type="match status" value="2"/>
</dbReference>
<dbReference type="Pfam" id="PF02737">
    <property type="entry name" value="3HCDH_N"/>
    <property type="match status" value="1"/>
</dbReference>
<dbReference type="Pfam" id="PF00378">
    <property type="entry name" value="ECH_1"/>
    <property type="match status" value="1"/>
</dbReference>
<dbReference type="SUPFAM" id="SSF48179">
    <property type="entry name" value="6-phosphogluconate dehydrogenase C-terminal domain-like"/>
    <property type="match status" value="2"/>
</dbReference>
<dbReference type="SUPFAM" id="SSF52096">
    <property type="entry name" value="ClpP/crotonase"/>
    <property type="match status" value="1"/>
</dbReference>
<dbReference type="SUPFAM" id="SSF51735">
    <property type="entry name" value="NAD(P)-binding Rossmann-fold domains"/>
    <property type="match status" value="1"/>
</dbReference>
<dbReference type="PROSITE" id="PS00067">
    <property type="entry name" value="3HCDH"/>
    <property type="match status" value="1"/>
</dbReference>
<gene>
    <name evidence="1" type="primary">fadJ</name>
    <name type="ordered locus">E2348C_2480</name>
</gene>
<accession>B7UFZ8</accession>
<keyword id="KW-0963">Cytoplasm</keyword>
<keyword id="KW-0276">Fatty acid metabolism</keyword>
<keyword id="KW-0413">Isomerase</keyword>
<keyword id="KW-0442">Lipid degradation</keyword>
<keyword id="KW-0443">Lipid metabolism</keyword>
<keyword id="KW-0456">Lyase</keyword>
<keyword id="KW-0511">Multifunctional enzyme</keyword>
<keyword id="KW-0520">NAD</keyword>
<keyword id="KW-0560">Oxidoreductase</keyword>
<keyword id="KW-1185">Reference proteome</keyword>
<reference key="1">
    <citation type="journal article" date="2009" name="J. Bacteriol.">
        <title>Complete genome sequence and comparative genome analysis of enteropathogenic Escherichia coli O127:H6 strain E2348/69.</title>
        <authorList>
            <person name="Iguchi A."/>
            <person name="Thomson N.R."/>
            <person name="Ogura Y."/>
            <person name="Saunders D."/>
            <person name="Ooka T."/>
            <person name="Henderson I.R."/>
            <person name="Harris D."/>
            <person name="Asadulghani M."/>
            <person name="Kurokawa K."/>
            <person name="Dean P."/>
            <person name="Kenny B."/>
            <person name="Quail M.A."/>
            <person name="Thurston S."/>
            <person name="Dougan G."/>
            <person name="Hayashi T."/>
            <person name="Parkhill J."/>
            <person name="Frankel G."/>
        </authorList>
    </citation>
    <scope>NUCLEOTIDE SEQUENCE [LARGE SCALE GENOMIC DNA]</scope>
    <source>
        <strain>E2348/69 / EPEC</strain>
    </source>
</reference>
<comment type="function">
    <text evidence="1">Catalyzes the formation of a hydroxyacyl-CoA by addition of water on enoyl-CoA. Also exhibits 3-hydroxyacyl-CoA epimerase and 3-hydroxyacyl-CoA dehydrogenase activities.</text>
</comment>
<comment type="catalytic activity">
    <reaction evidence="1">
        <text>a (3S)-3-hydroxyacyl-CoA = a (2E)-enoyl-CoA + H2O</text>
        <dbReference type="Rhea" id="RHEA:16105"/>
        <dbReference type="ChEBI" id="CHEBI:15377"/>
        <dbReference type="ChEBI" id="CHEBI:57318"/>
        <dbReference type="ChEBI" id="CHEBI:58856"/>
        <dbReference type="EC" id="4.2.1.17"/>
    </reaction>
</comment>
<comment type="catalytic activity">
    <reaction evidence="1">
        <text>a 4-saturated-(3S)-3-hydroxyacyl-CoA = a (3E)-enoyl-CoA + H2O</text>
        <dbReference type="Rhea" id="RHEA:20724"/>
        <dbReference type="ChEBI" id="CHEBI:15377"/>
        <dbReference type="ChEBI" id="CHEBI:58521"/>
        <dbReference type="ChEBI" id="CHEBI:137480"/>
        <dbReference type="EC" id="4.2.1.17"/>
    </reaction>
</comment>
<comment type="catalytic activity">
    <reaction evidence="1">
        <text>a (3S)-3-hydroxyacyl-CoA + NAD(+) = a 3-oxoacyl-CoA + NADH + H(+)</text>
        <dbReference type="Rhea" id="RHEA:22432"/>
        <dbReference type="ChEBI" id="CHEBI:15378"/>
        <dbReference type="ChEBI" id="CHEBI:57318"/>
        <dbReference type="ChEBI" id="CHEBI:57540"/>
        <dbReference type="ChEBI" id="CHEBI:57945"/>
        <dbReference type="ChEBI" id="CHEBI:90726"/>
        <dbReference type="EC" id="1.1.1.35"/>
    </reaction>
</comment>
<comment type="catalytic activity">
    <reaction evidence="1">
        <text>(3S)-3-hydroxybutanoyl-CoA = (3R)-3-hydroxybutanoyl-CoA</text>
        <dbReference type="Rhea" id="RHEA:21760"/>
        <dbReference type="ChEBI" id="CHEBI:57315"/>
        <dbReference type="ChEBI" id="CHEBI:57316"/>
        <dbReference type="EC" id="5.1.2.3"/>
    </reaction>
</comment>
<comment type="pathway">
    <text evidence="1">Lipid metabolism; fatty acid beta-oxidation.</text>
</comment>
<comment type="subunit">
    <text evidence="1">Heterotetramer of two alpha chains (FadJ) and two beta chains (FadI).</text>
</comment>
<comment type="subcellular location">
    <subcellularLocation>
        <location evidence="1">Cytoplasm</location>
    </subcellularLocation>
</comment>
<comment type="similarity">
    <text evidence="1">In the N-terminal section; belongs to the enoyl-CoA hydratase/isomerase family.</text>
</comment>
<comment type="similarity">
    <text evidence="1">In the central section; belongs to the 3-hydroxyacyl-CoA dehydrogenase family.</text>
</comment>
<evidence type="ECO:0000255" key="1">
    <source>
        <dbReference type="HAMAP-Rule" id="MF_01617"/>
    </source>
</evidence>
<feature type="chain" id="PRO_1000185934" description="Fatty acid oxidation complex subunit alpha">
    <location>
        <begin position="1"/>
        <end position="714"/>
    </location>
</feature>
<feature type="region of interest" description="Enoyl-CoA hydratase" evidence="1">
    <location>
        <begin position="1"/>
        <end position="190"/>
    </location>
</feature>
<feature type="region of interest" description="3-hydroxyacyl-CoA dehydrogenase" evidence="1">
    <location>
        <begin position="306"/>
        <end position="714"/>
    </location>
</feature>
<feature type="site" description="Important for catalytic activity" evidence="1">
    <location>
        <position position="118"/>
    </location>
</feature>
<feature type="site" description="Important for catalytic activity" evidence="1">
    <location>
        <position position="140"/>
    </location>
</feature>
<name>FADJ_ECO27</name>